<accession>B5YQW8</accession>
<proteinExistence type="inferred from homology"/>
<gene>
    <name evidence="1" type="primary">mgrB</name>
    <name type="ordered locus">ECH74115_2557</name>
</gene>
<name>MGRB_ECO5E</name>
<keyword id="KW-0997">Cell inner membrane</keyword>
<keyword id="KW-1003">Cell membrane</keyword>
<keyword id="KW-0472">Membrane</keyword>
<keyword id="KW-0812">Transmembrane</keyword>
<keyword id="KW-1133">Transmembrane helix</keyword>
<feature type="chain" id="PRO_1000201566" description="PhoP/PhoQ regulator MgrB">
    <location>
        <begin position="1"/>
        <end position="47"/>
    </location>
</feature>
<feature type="transmembrane region" description="Helical" evidence="1">
    <location>
        <begin position="6"/>
        <end position="26"/>
    </location>
</feature>
<organism>
    <name type="scientific">Escherichia coli O157:H7 (strain EC4115 / EHEC)</name>
    <dbReference type="NCBI Taxonomy" id="444450"/>
    <lineage>
        <taxon>Bacteria</taxon>
        <taxon>Pseudomonadati</taxon>
        <taxon>Pseudomonadota</taxon>
        <taxon>Gammaproteobacteria</taxon>
        <taxon>Enterobacterales</taxon>
        <taxon>Enterobacteriaceae</taxon>
        <taxon>Escherichia</taxon>
    </lineage>
</organism>
<sequence>MKKFRWVVLVVVVLACLLLWAQVFNMMCDQDVQFFSGICAINQFIPW</sequence>
<comment type="function">
    <text evidence="1">PhoP-regulated transcription is redox-sensitive, being activated when the periplasm becomes more reducing. MgrB acts between DsbA/DsbB and PhoP/PhoQ in this pathway. Represses PhoP/PhoQ signaling, possibly by binding to the periplasmic domain of PhoQ, altering its activity and that of downstream effector PhoP.</text>
</comment>
<comment type="subunit">
    <text evidence="1">May form homooligomers. Probably interacts with the periplasmic domain of PhoQ.</text>
</comment>
<comment type="subcellular location">
    <subcellularLocation>
        <location evidence="1">Cell inner membrane</location>
        <topology evidence="1">Single-pass membrane protein</topology>
    </subcellularLocation>
</comment>
<comment type="similarity">
    <text evidence="1">Belongs to the MgrB family.</text>
</comment>
<dbReference type="EMBL" id="CP001164">
    <property type="protein sequence ID" value="ACI38395.1"/>
    <property type="molecule type" value="Genomic_DNA"/>
</dbReference>
<dbReference type="RefSeq" id="WP_000714550.1">
    <property type="nucleotide sequence ID" value="NC_011353.1"/>
</dbReference>
<dbReference type="SMR" id="B5YQW8"/>
<dbReference type="GeneID" id="93776075"/>
<dbReference type="KEGG" id="ecf:ECH74115_2557"/>
<dbReference type="HOGENOM" id="CLU_208030_1_0_6"/>
<dbReference type="GO" id="GO:0005886">
    <property type="term" value="C:plasma membrane"/>
    <property type="evidence" value="ECO:0007669"/>
    <property type="project" value="UniProtKB-SubCell"/>
</dbReference>
<dbReference type="GO" id="GO:0070298">
    <property type="term" value="P:negative regulation of phosphorelay signal transduction system"/>
    <property type="evidence" value="ECO:0007669"/>
    <property type="project" value="UniProtKB-UniRule"/>
</dbReference>
<dbReference type="HAMAP" id="MF_01596">
    <property type="entry name" value="MgrB"/>
    <property type="match status" value="1"/>
</dbReference>
<dbReference type="InterPro" id="IPR020907">
    <property type="entry name" value="MgrB"/>
</dbReference>
<dbReference type="NCBIfam" id="NF007635">
    <property type="entry name" value="PRK10299.1"/>
    <property type="match status" value="1"/>
</dbReference>
<dbReference type="Pfam" id="PF13998">
    <property type="entry name" value="MgrB"/>
    <property type="match status" value="1"/>
</dbReference>
<dbReference type="PROSITE" id="PS51257">
    <property type="entry name" value="PROKAR_LIPOPROTEIN"/>
    <property type="match status" value="1"/>
</dbReference>
<reference key="1">
    <citation type="journal article" date="2011" name="Proc. Natl. Acad. Sci. U.S.A.">
        <title>Genomic anatomy of Escherichia coli O157:H7 outbreaks.</title>
        <authorList>
            <person name="Eppinger M."/>
            <person name="Mammel M.K."/>
            <person name="Leclerc J.E."/>
            <person name="Ravel J."/>
            <person name="Cebula T.A."/>
        </authorList>
    </citation>
    <scope>NUCLEOTIDE SEQUENCE [LARGE SCALE GENOMIC DNA]</scope>
    <source>
        <strain>EC4115 / EHEC</strain>
    </source>
</reference>
<protein>
    <recommendedName>
        <fullName evidence="1">PhoP/PhoQ regulator MgrB</fullName>
    </recommendedName>
</protein>
<evidence type="ECO:0000255" key="1">
    <source>
        <dbReference type="HAMAP-Rule" id="MF_01596"/>
    </source>
</evidence>